<dbReference type="EC" id="1.3.99.27"/>
<dbReference type="EMBL" id="X63204">
    <property type="protein sequence ID" value="CAA44886.1"/>
    <property type="molecule type" value="Genomic_DNA"/>
</dbReference>
<dbReference type="EMBL" id="AJ010302">
    <property type="protein sequence ID" value="CAB38743.1"/>
    <property type="status" value="ALT_SEQ"/>
    <property type="molecule type" value="Genomic_DNA"/>
</dbReference>
<dbReference type="EMBL" id="CP000143">
    <property type="protein sequence ID" value="ABA79440.1"/>
    <property type="molecule type" value="Genomic_DNA"/>
</dbReference>
<dbReference type="PIR" id="S23633">
    <property type="entry name" value="S23633"/>
</dbReference>
<dbReference type="RefSeq" id="WP_011338113.1">
    <property type="nucleotide sequence ID" value="NC_007493.2"/>
</dbReference>
<dbReference type="RefSeq" id="YP_353341.1">
    <property type="nucleotide sequence ID" value="NC_007493.2"/>
</dbReference>
<dbReference type="SMR" id="Q01671"/>
<dbReference type="STRING" id="272943.RSP_0266"/>
<dbReference type="EnsemblBacteria" id="ABA79440">
    <property type="protein sequence ID" value="ABA79440"/>
    <property type="gene ID" value="RSP_0266"/>
</dbReference>
<dbReference type="GeneID" id="3719276"/>
<dbReference type="KEGG" id="rsp:RSP_0266"/>
<dbReference type="PATRIC" id="fig|272943.9.peg.2210"/>
<dbReference type="eggNOG" id="COG1233">
    <property type="taxonomic scope" value="Bacteria"/>
</dbReference>
<dbReference type="OrthoDB" id="9774675at2"/>
<dbReference type="PhylomeDB" id="Q01671"/>
<dbReference type="SABIO-RK" id="Q01671"/>
<dbReference type="UniPathway" id="UPA00683"/>
<dbReference type="Proteomes" id="UP000002703">
    <property type="component" value="Chromosome 1"/>
</dbReference>
<dbReference type="GO" id="GO:0016627">
    <property type="term" value="F:oxidoreductase activity, acting on the CH-CH group of donors"/>
    <property type="evidence" value="ECO:0007669"/>
    <property type="project" value="UniProtKB-ARBA"/>
</dbReference>
<dbReference type="GO" id="GO:0016117">
    <property type="term" value="P:carotenoid biosynthetic process"/>
    <property type="evidence" value="ECO:0007669"/>
    <property type="project" value="UniProtKB-KW"/>
</dbReference>
<dbReference type="GO" id="GO:0015995">
    <property type="term" value="P:chlorophyll biosynthetic process"/>
    <property type="evidence" value="ECO:0007669"/>
    <property type="project" value="UniProtKB-KW"/>
</dbReference>
<dbReference type="GO" id="GO:0015979">
    <property type="term" value="P:photosynthesis"/>
    <property type="evidence" value="ECO:0007669"/>
    <property type="project" value="UniProtKB-KW"/>
</dbReference>
<dbReference type="Gene3D" id="3.50.50.60">
    <property type="entry name" value="FAD/NAD(P)-binding domain"/>
    <property type="match status" value="2"/>
</dbReference>
<dbReference type="InterPro" id="IPR002937">
    <property type="entry name" value="Amino_oxidase"/>
</dbReference>
<dbReference type="InterPro" id="IPR054841">
    <property type="entry name" value="carotdesatCrtD"/>
</dbReference>
<dbReference type="InterPro" id="IPR014105">
    <property type="entry name" value="Carotenoid/retinoid_OxRdtase"/>
</dbReference>
<dbReference type="InterPro" id="IPR036188">
    <property type="entry name" value="FAD/NAD-bd_sf"/>
</dbReference>
<dbReference type="InterPro" id="IPR008150">
    <property type="entry name" value="Phytoene_DH_bac_CS"/>
</dbReference>
<dbReference type="NCBIfam" id="NF045637">
    <property type="entry name" value="carotdesatCrtDProt"/>
    <property type="match status" value="1"/>
</dbReference>
<dbReference type="NCBIfam" id="TIGR02734">
    <property type="entry name" value="crtI_fam"/>
    <property type="match status" value="1"/>
</dbReference>
<dbReference type="PANTHER" id="PTHR43734:SF7">
    <property type="entry name" value="4,4'-DIAPONEUROSPORENE OXYGENASE"/>
    <property type="match status" value="1"/>
</dbReference>
<dbReference type="PANTHER" id="PTHR43734">
    <property type="entry name" value="PHYTOENE DESATURASE"/>
    <property type="match status" value="1"/>
</dbReference>
<dbReference type="Pfam" id="PF01593">
    <property type="entry name" value="Amino_oxidase"/>
    <property type="match status" value="1"/>
</dbReference>
<dbReference type="PRINTS" id="PR00945">
    <property type="entry name" value="HGRDTASE"/>
</dbReference>
<dbReference type="SUPFAM" id="SSF51905">
    <property type="entry name" value="FAD/NAD(P)-binding domain"/>
    <property type="match status" value="1"/>
</dbReference>
<dbReference type="PROSITE" id="PS00982">
    <property type="entry name" value="PHYTOENE_DH"/>
    <property type="match status" value="1"/>
</dbReference>
<accession>Q01671</accession>
<accession>Q3J194</accession>
<sequence length="495" mass="53033">MRQIVPKVVVVGAGMGGLASAIRLARAGCEVTLLEAREAPGGRMRTLPSVAGPVDAGPTVLTLREVFDDIFEVCGQKLDHHLTLLPQPLLARHWWLDGSTLDLTTDLEANVEAVAAFAGAREARAFRRFHDLSARLYDAFDRPMMRAARPDLRAIATGALKAPRTWPALLPGMTLDRLLRLFFRDRRLRQLFGRYATYVGGTPYGAPGVLALIWAAEARGVWAIEGGMHRLALALARLADDQGVRLRYGAPVARILRQGGRATGVQLADGRTLPADHIVFNGDPAALLAGCLGDGPQDAVPEDRIHPRSLSAWVWSYAARASGPPLVHHNVFFADDPRREFGPIAAGQMPEDATLYICAEDRSGGQLPDGPERFEIIMNGPPGRPAKPEDFAQCRSRTFDRLRQFGLTFDPVPGETSLTAPSGFASLFPASQGSIYGLSPHGALASLKRPLARTALPGLWLAGGGAHPGAGVPMAALSGRHAAEAILADLASRSR</sequence>
<evidence type="ECO:0000269" key="1">
    <source>
    </source>
</evidence>
<evidence type="ECO:0000305" key="2"/>
<evidence type="ECO:0000305" key="3">
    <source>
    </source>
</evidence>
<reference key="1">
    <citation type="journal article" date="1992" name="FEMS Microbiol. Lett.">
        <title>Nucleotide sequence of the methoxyneurosporene dehydrogenase gene from Rhodobacter sphaeroides: comparison with other bacterial carotenoid dehydrogenases.</title>
        <authorList>
            <person name="Gari E."/>
            <person name="Toledo J.C."/>
            <person name="Gibert I."/>
            <person name="Barbe J."/>
        </authorList>
    </citation>
    <scope>NUCLEOTIDE SEQUENCE [GENOMIC DNA]</scope>
</reference>
<reference key="2">
    <citation type="journal article" date="1995" name="J. Bacteriol.">
        <title>Complete DNA sequence, specific Tn5 insertion map, and gene assignment of the carotenoid biosynthesis pathway of Rhodobacter sphaeroides.</title>
        <authorList>
            <person name="Lang H.P."/>
            <person name="Cogdell R.J."/>
            <person name="Takaichi S."/>
            <person name="Hunter C.N."/>
        </authorList>
    </citation>
    <scope>NUCLEOTIDE SEQUENCE [GENOMIC DNA]</scope>
</reference>
<reference key="3">
    <citation type="submission" date="2005-09" db="EMBL/GenBank/DDBJ databases">
        <title>Complete sequence of chromosome 1 of Rhodobacter sphaeroides 2.4.1.</title>
        <authorList>
            <person name="Copeland A."/>
            <person name="Lucas S."/>
            <person name="Lapidus A."/>
            <person name="Barry K."/>
            <person name="Detter J.C."/>
            <person name="Glavina T."/>
            <person name="Hammon N."/>
            <person name="Israni S."/>
            <person name="Pitluck S."/>
            <person name="Richardson P."/>
            <person name="Mackenzie C."/>
            <person name="Choudhary M."/>
            <person name="Larimer F."/>
            <person name="Hauser L.J."/>
            <person name="Land M."/>
            <person name="Donohue T.J."/>
            <person name="Kaplan S."/>
        </authorList>
    </citation>
    <scope>NUCLEOTIDE SEQUENCE [LARGE SCALE GENOMIC DNA]</scope>
    <source>
        <strain>ATCC 17023 / DSM 158 / JCM 6121 / CCUG 31486 / LMG 2827 / NBRC 12203 / NCIMB 8253 / ATH 2.4.1.</strain>
    </source>
</reference>
<reference key="4">
    <citation type="journal article" date="1997" name="J. Bacteriol.">
        <title>Purification and biochemical characterization of a hydroxyneurosporene desaturase involved in the biosynthetic pathway of the carotenoid spheroidene in Rhodobacter sphaeroides.</title>
        <authorList>
            <person name="Albrecht M."/>
            <person name="Ruther A."/>
            <person name="Sandmann G."/>
        </authorList>
    </citation>
    <scope>FUNCTION</scope>
    <scope>CATALYTIC ACTIVITY</scope>
    <scope>BIOPHYSICOCHEMICAL PROPERTIES</scope>
    <scope>SUBSTRATE SPECIFICITY</scope>
</reference>
<feature type="chain" id="PRO_0000067684" description="Hydroxyneurosporene desaturase">
    <location>
        <begin position="1"/>
        <end position="495"/>
    </location>
</feature>
<feature type="sequence conflict" description="In Ref. 2; CAB38743." evidence="2" ref="2">
    <original>A</original>
    <variation>G</variation>
    <location>
        <position position="115"/>
    </location>
</feature>
<feature type="sequence conflict" description="In Ref. 1; CAA44886 and 2; CAB38743." evidence="2" ref="1 2">
    <original>R</original>
    <variation>P</variation>
    <location>
        <position position="124"/>
    </location>
</feature>
<feature type="sequence conflict" description="In Ref. 2; CAB38743." evidence="2" ref="2">
    <original>T</original>
    <variation>P</variation>
    <location>
        <position position="157"/>
    </location>
</feature>
<feature type="sequence conflict" description="In Ref. 2; CAB38743." evidence="2" ref="2">
    <original>L</original>
    <variation>M</variation>
    <location>
        <position position="170"/>
    </location>
</feature>
<feature type="sequence conflict" description="In Ref. 1; CAA44886 and 2; CAB38743." evidence="2" ref="1 2">
    <original>R</original>
    <variation>G</variation>
    <location>
        <position position="254"/>
    </location>
</feature>
<feature type="sequence conflict" description="In Ref. 1; CAA44886 and 2; CAB38743." evidence="2" ref="1 2">
    <original>A</original>
    <variation>P</variation>
    <location>
        <position position="262"/>
    </location>
</feature>
<feature type="sequence conflict" description="In Ref. 2; CAB38743." evidence="2" ref="2">
    <original>L</original>
    <variation>I</variation>
    <location>
        <position position="273"/>
    </location>
</feature>
<feature type="sequence conflict" description="In Ref. 1; CAA44886." evidence="2" ref="1">
    <original>PHGA</original>
    <variation>ATGP</variation>
    <location>
        <begin position="440"/>
        <end position="443"/>
    </location>
</feature>
<organism>
    <name type="scientific">Cereibacter sphaeroides (strain ATCC 17023 / DSM 158 / JCM 6121 / CCUG 31486 / LMG 2827 / NBRC 12203 / NCIMB 8253 / ATH 2.4.1.)</name>
    <name type="common">Rhodobacter sphaeroides</name>
    <dbReference type="NCBI Taxonomy" id="272943"/>
    <lineage>
        <taxon>Bacteria</taxon>
        <taxon>Pseudomonadati</taxon>
        <taxon>Pseudomonadota</taxon>
        <taxon>Alphaproteobacteria</taxon>
        <taxon>Rhodobacterales</taxon>
        <taxon>Paracoccaceae</taxon>
        <taxon>Cereibacter</taxon>
    </lineage>
</organism>
<gene>
    <name type="primary">crtD</name>
    <name type="ordered locus">RHOS4_18720</name>
    <name type="ORF">RSP_0266</name>
</gene>
<keyword id="KW-0125">Carotenoid biosynthesis</keyword>
<keyword id="KW-0149">Chlorophyll biosynthesis</keyword>
<keyword id="KW-0560">Oxidoreductase</keyword>
<keyword id="KW-0602">Photosynthesis</keyword>
<keyword id="KW-1185">Reference proteome</keyword>
<protein>
    <recommendedName>
        <fullName>Hydroxyneurosporene desaturase</fullName>
        <shortName>HND</shortName>
    </recommendedName>
    <alternativeName>
        <fullName>1-hydroxycarotenoid 3,4-dehydrogenase</fullName>
    </alternativeName>
    <alternativeName>
        <fullName>1-hydroxycarotenoid 3,4-desaturase</fullName>
        <ecNumber>1.3.99.27</ecNumber>
    </alternativeName>
</protein>
<proteinExistence type="evidence at protein level"/>
<comment type="function">
    <text evidence="1">Catalyzes the introduction of C-3,4 double bonds into 1-hydroxyneurosporene (1-HO-Neu) to yield demethylspheroidene (DMS). It prefer the acyclic carotenoids such as 1-hydroxylycopene, and 1-hydroxy-gamma-carotene, whereas 1-hydroxy-3,4-didehydrolycopene and 1,1-dihydroxylycopene are much less effective.</text>
</comment>
<comment type="catalytic activity">
    <reaction evidence="1">
        <text>rhodopin + A = (3E)-3,4-didehydrorhodopin + AH2</text>
        <dbReference type="Rhea" id="RHEA:30919"/>
        <dbReference type="ChEBI" id="CHEBI:13193"/>
        <dbReference type="ChEBI" id="CHEBI:17499"/>
        <dbReference type="ChEBI" id="CHEBI:35331"/>
        <dbReference type="ChEBI" id="CHEBI:62481"/>
        <dbReference type="EC" id="1.3.99.27"/>
    </reaction>
</comment>
<comment type="biophysicochemical properties">
    <kinetics>
        <KM evidence="1">13.4 uM for hydroxyneurosporene (at pH 30 degrees Celsius and pH 8)</KM>
    </kinetics>
</comment>
<comment type="pathway">
    <text>Carotenoid biosynthesis; spheroidene biosynthesis.</text>
</comment>
<comment type="miscellaneous">
    <text evidence="3">The hydrogen acceptor in the C-3,4 desaturation reaction is molecular oxygen. NAD, NADP, and FAD have no influence on enzymatic activity. Another unknown electron acceptor may exist in Rhodobacter species that replaces molecular oxygen during anaerobic growth (PubMed:9393712).</text>
</comment>
<comment type="similarity">
    <text evidence="2">Belongs to the carotenoid/retinoid oxidoreductase family.</text>
</comment>
<name>CRTD_CERS4</name>